<accession>Q8FL57</accession>
<gene>
    <name evidence="1" type="primary">yacG</name>
    <name type="ordered locus">c0121</name>
</gene>
<comment type="function">
    <text evidence="1">Inhibits all the catalytic activities of DNA gyrase by preventing its interaction with DNA. Acts by binding directly to the C-terminal domain of GyrB, which probably disrupts DNA binding by the gyrase.</text>
</comment>
<comment type="cofactor">
    <cofactor evidence="1">
        <name>Zn(2+)</name>
        <dbReference type="ChEBI" id="CHEBI:29105"/>
    </cofactor>
    <text evidence="1">Binds 1 zinc ion.</text>
</comment>
<comment type="subunit">
    <text evidence="1">Interacts with GyrB.</text>
</comment>
<comment type="similarity">
    <text evidence="1">Belongs to the DNA gyrase inhibitor YacG family.</text>
</comment>
<dbReference type="EMBL" id="AE014075">
    <property type="protein sequence ID" value="AAN78619.1"/>
    <property type="molecule type" value="Genomic_DNA"/>
</dbReference>
<dbReference type="RefSeq" id="WP_000005044.1">
    <property type="nucleotide sequence ID" value="NZ_CP051263.1"/>
</dbReference>
<dbReference type="SMR" id="Q8FL57"/>
<dbReference type="STRING" id="199310.c0121"/>
<dbReference type="KEGG" id="ecc:c0121"/>
<dbReference type="eggNOG" id="COG3024">
    <property type="taxonomic scope" value="Bacteria"/>
</dbReference>
<dbReference type="HOGENOM" id="CLU_178280_3_1_6"/>
<dbReference type="BioCyc" id="ECOL199310:C0121-MONOMER"/>
<dbReference type="Proteomes" id="UP000001410">
    <property type="component" value="Chromosome"/>
</dbReference>
<dbReference type="GO" id="GO:0008657">
    <property type="term" value="F:DNA topoisomerase type II (double strand cut, ATP-hydrolyzing) inhibitor activity"/>
    <property type="evidence" value="ECO:0007669"/>
    <property type="project" value="UniProtKB-UniRule"/>
</dbReference>
<dbReference type="GO" id="GO:0008270">
    <property type="term" value="F:zinc ion binding"/>
    <property type="evidence" value="ECO:0007669"/>
    <property type="project" value="UniProtKB-UniRule"/>
</dbReference>
<dbReference type="GO" id="GO:0006355">
    <property type="term" value="P:regulation of DNA-templated transcription"/>
    <property type="evidence" value="ECO:0007669"/>
    <property type="project" value="InterPro"/>
</dbReference>
<dbReference type="FunFam" id="3.30.50.10:FF:000026">
    <property type="entry name" value="DNA gyrase inhibitor YacG"/>
    <property type="match status" value="1"/>
</dbReference>
<dbReference type="Gene3D" id="3.30.50.10">
    <property type="entry name" value="Erythroid Transcription Factor GATA-1, subunit A"/>
    <property type="match status" value="1"/>
</dbReference>
<dbReference type="HAMAP" id="MF_00649">
    <property type="entry name" value="DNA_gyrase_inhibitor_YacG"/>
    <property type="match status" value="1"/>
</dbReference>
<dbReference type="InterPro" id="IPR005584">
    <property type="entry name" value="DNA_gyrase_inhibitor_YacG"/>
</dbReference>
<dbReference type="InterPro" id="IPR013088">
    <property type="entry name" value="Znf_NHR/GATA"/>
</dbReference>
<dbReference type="NCBIfam" id="NF001638">
    <property type="entry name" value="PRK00418.1"/>
    <property type="match status" value="1"/>
</dbReference>
<dbReference type="PANTHER" id="PTHR36150">
    <property type="entry name" value="DNA GYRASE INHIBITOR YACG"/>
    <property type="match status" value="1"/>
</dbReference>
<dbReference type="PANTHER" id="PTHR36150:SF1">
    <property type="entry name" value="DNA GYRASE INHIBITOR YACG"/>
    <property type="match status" value="1"/>
</dbReference>
<dbReference type="Pfam" id="PF03884">
    <property type="entry name" value="YacG"/>
    <property type="match status" value="1"/>
</dbReference>
<dbReference type="SUPFAM" id="SSF57716">
    <property type="entry name" value="Glucocorticoid receptor-like (DNA-binding domain)"/>
    <property type="match status" value="1"/>
</dbReference>
<protein>
    <recommendedName>
        <fullName evidence="1">DNA gyrase inhibitor YacG</fullName>
    </recommendedName>
</protein>
<feature type="chain" id="PRO_0000211697" description="DNA gyrase inhibitor YacG">
    <location>
        <begin position="1"/>
        <end position="65"/>
    </location>
</feature>
<feature type="region of interest" description="Disordered" evidence="2">
    <location>
        <begin position="44"/>
        <end position="65"/>
    </location>
</feature>
<feature type="compositionally biased region" description="Acidic residues" evidence="2">
    <location>
        <begin position="54"/>
        <end position="65"/>
    </location>
</feature>
<feature type="binding site" evidence="1">
    <location>
        <position position="9"/>
    </location>
    <ligand>
        <name>Zn(2+)</name>
        <dbReference type="ChEBI" id="CHEBI:29105"/>
    </ligand>
</feature>
<feature type="binding site" evidence="1">
    <location>
        <position position="12"/>
    </location>
    <ligand>
        <name>Zn(2+)</name>
        <dbReference type="ChEBI" id="CHEBI:29105"/>
    </ligand>
</feature>
<feature type="binding site" evidence="1">
    <location>
        <position position="28"/>
    </location>
    <ligand>
        <name>Zn(2+)</name>
        <dbReference type="ChEBI" id="CHEBI:29105"/>
    </ligand>
</feature>
<feature type="binding site" evidence="1">
    <location>
        <position position="32"/>
    </location>
    <ligand>
        <name>Zn(2+)</name>
        <dbReference type="ChEBI" id="CHEBI:29105"/>
    </ligand>
</feature>
<name>YACG_ECOL6</name>
<keyword id="KW-0479">Metal-binding</keyword>
<keyword id="KW-1185">Reference proteome</keyword>
<keyword id="KW-0862">Zinc</keyword>
<proteinExistence type="inferred from homology"/>
<organism>
    <name type="scientific">Escherichia coli O6:H1 (strain CFT073 / ATCC 700928 / UPEC)</name>
    <dbReference type="NCBI Taxonomy" id="199310"/>
    <lineage>
        <taxon>Bacteria</taxon>
        <taxon>Pseudomonadati</taxon>
        <taxon>Pseudomonadota</taxon>
        <taxon>Gammaproteobacteria</taxon>
        <taxon>Enterobacterales</taxon>
        <taxon>Enterobacteriaceae</taxon>
        <taxon>Escherichia</taxon>
    </lineage>
</organism>
<evidence type="ECO:0000255" key="1">
    <source>
        <dbReference type="HAMAP-Rule" id="MF_00649"/>
    </source>
</evidence>
<evidence type="ECO:0000256" key="2">
    <source>
        <dbReference type="SAM" id="MobiDB-lite"/>
    </source>
</evidence>
<sequence>MSETITVNCPTCGKTVVWGEISPFRPFCSKRCQLIDLGEWAAEEKRIPSSSDLSESDDWSEEPKQ</sequence>
<reference key="1">
    <citation type="journal article" date="2002" name="Proc. Natl. Acad. Sci. U.S.A.">
        <title>Extensive mosaic structure revealed by the complete genome sequence of uropathogenic Escherichia coli.</title>
        <authorList>
            <person name="Welch R.A."/>
            <person name="Burland V."/>
            <person name="Plunkett G. III"/>
            <person name="Redford P."/>
            <person name="Roesch P."/>
            <person name="Rasko D."/>
            <person name="Buckles E.L."/>
            <person name="Liou S.-R."/>
            <person name="Boutin A."/>
            <person name="Hackett J."/>
            <person name="Stroud D."/>
            <person name="Mayhew G.F."/>
            <person name="Rose D.J."/>
            <person name="Zhou S."/>
            <person name="Schwartz D.C."/>
            <person name="Perna N.T."/>
            <person name="Mobley H.L.T."/>
            <person name="Donnenberg M.S."/>
            <person name="Blattner F.R."/>
        </authorList>
    </citation>
    <scope>NUCLEOTIDE SEQUENCE [LARGE SCALE GENOMIC DNA]</scope>
    <source>
        <strain>CFT073 / ATCC 700928 / UPEC</strain>
    </source>
</reference>